<feature type="chain" id="PRO_0000059696" description="UDP-3-O-acylglucosamine N-acyltransferase">
    <location>
        <begin position="1"/>
        <end position="360"/>
    </location>
</feature>
<feature type="region of interest" description="Disordered" evidence="2">
    <location>
        <begin position="341"/>
        <end position="360"/>
    </location>
</feature>
<feature type="compositionally biased region" description="Basic and acidic residues" evidence="2">
    <location>
        <begin position="349"/>
        <end position="360"/>
    </location>
</feature>
<feature type="active site" description="Proton acceptor" evidence="1">
    <location>
        <position position="256"/>
    </location>
</feature>
<accession>Q6N5Q9</accession>
<dbReference type="EC" id="2.3.1.191" evidence="1"/>
<dbReference type="EMBL" id="BX572602">
    <property type="protein sequence ID" value="CAE28354.1"/>
    <property type="molecule type" value="Genomic_DNA"/>
</dbReference>
<dbReference type="RefSeq" id="WP_011158462.1">
    <property type="nucleotide sequence ID" value="NZ_CP116810.1"/>
</dbReference>
<dbReference type="SMR" id="Q6N5Q9"/>
<dbReference type="STRING" id="258594.RPA2913"/>
<dbReference type="GeneID" id="66893995"/>
<dbReference type="eggNOG" id="COG1044">
    <property type="taxonomic scope" value="Bacteria"/>
</dbReference>
<dbReference type="HOGENOM" id="CLU_049865_0_2_5"/>
<dbReference type="PhylomeDB" id="Q6N5Q9"/>
<dbReference type="UniPathway" id="UPA00973"/>
<dbReference type="GO" id="GO:0016020">
    <property type="term" value="C:membrane"/>
    <property type="evidence" value="ECO:0007669"/>
    <property type="project" value="GOC"/>
</dbReference>
<dbReference type="GO" id="GO:0016410">
    <property type="term" value="F:N-acyltransferase activity"/>
    <property type="evidence" value="ECO:0007669"/>
    <property type="project" value="InterPro"/>
</dbReference>
<dbReference type="GO" id="GO:0009245">
    <property type="term" value="P:lipid A biosynthetic process"/>
    <property type="evidence" value="ECO:0007669"/>
    <property type="project" value="UniProtKB-UniRule"/>
</dbReference>
<dbReference type="CDD" id="cd03352">
    <property type="entry name" value="LbH_LpxD"/>
    <property type="match status" value="1"/>
</dbReference>
<dbReference type="Gene3D" id="2.160.10.10">
    <property type="entry name" value="Hexapeptide repeat proteins"/>
    <property type="match status" value="1"/>
</dbReference>
<dbReference type="Gene3D" id="3.40.1390.10">
    <property type="entry name" value="MurE/MurF, N-terminal domain"/>
    <property type="match status" value="1"/>
</dbReference>
<dbReference type="HAMAP" id="MF_00523">
    <property type="entry name" value="LpxD"/>
    <property type="match status" value="1"/>
</dbReference>
<dbReference type="InterPro" id="IPR001451">
    <property type="entry name" value="Hexapep"/>
</dbReference>
<dbReference type="InterPro" id="IPR018357">
    <property type="entry name" value="Hexapep_transf_CS"/>
</dbReference>
<dbReference type="InterPro" id="IPR007691">
    <property type="entry name" value="LpxD"/>
</dbReference>
<dbReference type="InterPro" id="IPR011004">
    <property type="entry name" value="Trimer_LpxA-like_sf"/>
</dbReference>
<dbReference type="InterPro" id="IPR020573">
    <property type="entry name" value="UDP_GlcNAc_AcTrfase_non-rep"/>
</dbReference>
<dbReference type="NCBIfam" id="TIGR01853">
    <property type="entry name" value="lipid_A_lpxD"/>
    <property type="match status" value="1"/>
</dbReference>
<dbReference type="NCBIfam" id="NF002060">
    <property type="entry name" value="PRK00892.1"/>
    <property type="match status" value="1"/>
</dbReference>
<dbReference type="PANTHER" id="PTHR43378">
    <property type="entry name" value="UDP-3-O-ACYLGLUCOSAMINE N-ACYLTRANSFERASE"/>
    <property type="match status" value="1"/>
</dbReference>
<dbReference type="PANTHER" id="PTHR43378:SF2">
    <property type="entry name" value="UDP-3-O-ACYLGLUCOSAMINE N-ACYLTRANSFERASE 1, MITOCHONDRIAL-RELATED"/>
    <property type="match status" value="1"/>
</dbReference>
<dbReference type="Pfam" id="PF00132">
    <property type="entry name" value="Hexapep"/>
    <property type="match status" value="2"/>
</dbReference>
<dbReference type="Pfam" id="PF14602">
    <property type="entry name" value="Hexapep_2"/>
    <property type="match status" value="1"/>
</dbReference>
<dbReference type="Pfam" id="PF04613">
    <property type="entry name" value="LpxD"/>
    <property type="match status" value="1"/>
</dbReference>
<dbReference type="SUPFAM" id="SSF51161">
    <property type="entry name" value="Trimeric LpxA-like enzymes"/>
    <property type="match status" value="1"/>
</dbReference>
<dbReference type="PROSITE" id="PS00101">
    <property type="entry name" value="HEXAPEP_TRANSFERASES"/>
    <property type="match status" value="3"/>
</dbReference>
<keyword id="KW-0012">Acyltransferase</keyword>
<keyword id="KW-0441">Lipid A biosynthesis</keyword>
<keyword id="KW-0444">Lipid biosynthesis</keyword>
<keyword id="KW-0443">Lipid metabolism</keyword>
<keyword id="KW-0677">Repeat</keyword>
<keyword id="KW-0808">Transferase</keyword>
<name>LPXD_RHOPA</name>
<evidence type="ECO:0000255" key="1">
    <source>
        <dbReference type="HAMAP-Rule" id="MF_00523"/>
    </source>
</evidence>
<evidence type="ECO:0000256" key="2">
    <source>
        <dbReference type="SAM" id="MobiDB-lite"/>
    </source>
</evidence>
<protein>
    <recommendedName>
        <fullName evidence="1">UDP-3-O-acylglucosamine N-acyltransferase</fullName>
        <ecNumber evidence="1">2.3.1.191</ecNumber>
    </recommendedName>
</protein>
<proteinExistence type="inferred from homology"/>
<comment type="function">
    <text evidence="1">Catalyzes the N-acylation of UDP-3-O-acylglucosamine using 3-hydroxyacyl-ACP as the acyl donor. Is involved in the biosynthesis of lipid A, a phosphorylated glycolipid that anchors the lipopolysaccharide to the outer membrane of the cell.</text>
</comment>
<comment type="catalytic activity">
    <reaction evidence="1">
        <text>a UDP-3-O-[(3R)-3-hydroxyacyl]-alpha-D-glucosamine + a (3R)-hydroxyacyl-[ACP] = a UDP-2-N,3-O-bis[(3R)-3-hydroxyacyl]-alpha-D-glucosamine + holo-[ACP] + H(+)</text>
        <dbReference type="Rhea" id="RHEA:53836"/>
        <dbReference type="Rhea" id="RHEA-COMP:9685"/>
        <dbReference type="Rhea" id="RHEA-COMP:9945"/>
        <dbReference type="ChEBI" id="CHEBI:15378"/>
        <dbReference type="ChEBI" id="CHEBI:64479"/>
        <dbReference type="ChEBI" id="CHEBI:78827"/>
        <dbReference type="ChEBI" id="CHEBI:137740"/>
        <dbReference type="ChEBI" id="CHEBI:137748"/>
        <dbReference type="EC" id="2.3.1.191"/>
    </reaction>
</comment>
<comment type="pathway">
    <text evidence="1">Bacterial outer membrane biogenesis; LPS lipid A biosynthesis.</text>
</comment>
<comment type="subunit">
    <text evidence="1">Homotrimer.</text>
</comment>
<comment type="similarity">
    <text evidence="1">Belongs to the transferase hexapeptide repeat family. LpxD subfamily.</text>
</comment>
<gene>
    <name evidence="1" type="primary">lpxD</name>
    <name type="ordered locus">RPA2913</name>
</gene>
<reference key="1">
    <citation type="journal article" date="2004" name="Nat. Biotechnol.">
        <title>Complete genome sequence of the metabolically versatile photosynthetic bacterium Rhodopseudomonas palustris.</title>
        <authorList>
            <person name="Larimer F.W."/>
            <person name="Chain P."/>
            <person name="Hauser L."/>
            <person name="Lamerdin J.E."/>
            <person name="Malfatti S."/>
            <person name="Do L."/>
            <person name="Land M.L."/>
            <person name="Pelletier D.A."/>
            <person name="Beatty J.T."/>
            <person name="Lang A.S."/>
            <person name="Tabita F.R."/>
            <person name="Gibson J.L."/>
            <person name="Hanson T.E."/>
            <person name="Bobst C."/>
            <person name="Torres y Torres J.L."/>
            <person name="Peres C."/>
            <person name="Harrison F.H."/>
            <person name="Gibson J."/>
            <person name="Harwood C.S."/>
        </authorList>
    </citation>
    <scope>NUCLEOTIDE SEQUENCE [LARGE SCALE GENOMIC DNA]</scope>
    <source>
        <strain>ATCC BAA-98 / CGA009</strain>
    </source>
</reference>
<sequence>MASTSFFPPRPSSTLAEIASLTKATLVDASYAEHRITGLASLDEAGPMHLSFFENLRYSDELANTRAGACLVSERFEGRVPSHVAVLRARRPFHAFVAYARHLYSDALRPHTGVGAPGIAPTAVIHETAKLEDEVTVEPLAVIGPDVEIGSGTVIGAGAVIAAGVKIGRDCDIGAGSHLQHALIGNNVLMHPGCHIGQDGFGFIFAGQHTKVPQTGRVIIQHDVELGAGTTIDRGSLRDTVIGEGTKIDNQVQIGHNVTIGRHCVIAAKCGLAGSLTLGDNVALGAMVGINNHVVIGDGAQVAAMSGVKDSIPAGERWGGIFARPTRTWFREMLAVRRLAEGSGAETAARPDDDRDEGRG</sequence>
<organism>
    <name type="scientific">Rhodopseudomonas palustris (strain ATCC BAA-98 / CGA009)</name>
    <dbReference type="NCBI Taxonomy" id="258594"/>
    <lineage>
        <taxon>Bacteria</taxon>
        <taxon>Pseudomonadati</taxon>
        <taxon>Pseudomonadota</taxon>
        <taxon>Alphaproteobacteria</taxon>
        <taxon>Hyphomicrobiales</taxon>
        <taxon>Nitrobacteraceae</taxon>
        <taxon>Rhodopseudomonas</taxon>
    </lineage>
</organism>